<dbReference type="EMBL" id="CP000538">
    <property type="protein sequence ID" value="EAQ73181.1"/>
    <property type="molecule type" value="Genomic_DNA"/>
</dbReference>
<dbReference type="RefSeq" id="WP_002851603.1">
    <property type="nucleotide sequence ID" value="NC_008787.1"/>
</dbReference>
<dbReference type="SMR" id="A1VXN9"/>
<dbReference type="KEGG" id="cjj:CJJ81176_0191"/>
<dbReference type="eggNOG" id="COG0254">
    <property type="taxonomic scope" value="Bacteria"/>
</dbReference>
<dbReference type="HOGENOM" id="CLU_114306_4_3_7"/>
<dbReference type="Proteomes" id="UP000000646">
    <property type="component" value="Chromosome"/>
</dbReference>
<dbReference type="GO" id="GO:1990904">
    <property type="term" value="C:ribonucleoprotein complex"/>
    <property type="evidence" value="ECO:0007669"/>
    <property type="project" value="UniProtKB-KW"/>
</dbReference>
<dbReference type="GO" id="GO:0005840">
    <property type="term" value="C:ribosome"/>
    <property type="evidence" value="ECO:0007669"/>
    <property type="project" value="UniProtKB-KW"/>
</dbReference>
<dbReference type="GO" id="GO:0046872">
    <property type="term" value="F:metal ion binding"/>
    <property type="evidence" value="ECO:0007669"/>
    <property type="project" value="UniProtKB-KW"/>
</dbReference>
<dbReference type="GO" id="GO:0019843">
    <property type="term" value="F:rRNA binding"/>
    <property type="evidence" value="ECO:0007669"/>
    <property type="project" value="UniProtKB-KW"/>
</dbReference>
<dbReference type="GO" id="GO:0003735">
    <property type="term" value="F:structural constituent of ribosome"/>
    <property type="evidence" value="ECO:0007669"/>
    <property type="project" value="InterPro"/>
</dbReference>
<dbReference type="GO" id="GO:0006412">
    <property type="term" value="P:translation"/>
    <property type="evidence" value="ECO:0007669"/>
    <property type="project" value="UniProtKB-UniRule"/>
</dbReference>
<dbReference type="Gene3D" id="4.10.830.30">
    <property type="entry name" value="Ribosomal protein L31"/>
    <property type="match status" value="1"/>
</dbReference>
<dbReference type="HAMAP" id="MF_00501">
    <property type="entry name" value="Ribosomal_bL31_1"/>
    <property type="match status" value="1"/>
</dbReference>
<dbReference type="InterPro" id="IPR034704">
    <property type="entry name" value="Ribosomal_bL28/bL31-like_sf"/>
</dbReference>
<dbReference type="InterPro" id="IPR002150">
    <property type="entry name" value="Ribosomal_bL31"/>
</dbReference>
<dbReference type="InterPro" id="IPR027491">
    <property type="entry name" value="Ribosomal_bL31_A"/>
</dbReference>
<dbReference type="InterPro" id="IPR042105">
    <property type="entry name" value="Ribosomal_bL31_sf"/>
</dbReference>
<dbReference type="NCBIfam" id="TIGR00105">
    <property type="entry name" value="L31"/>
    <property type="match status" value="1"/>
</dbReference>
<dbReference type="NCBIfam" id="NF000612">
    <property type="entry name" value="PRK00019.1"/>
    <property type="match status" value="1"/>
</dbReference>
<dbReference type="NCBIfam" id="NF001809">
    <property type="entry name" value="PRK00528.1"/>
    <property type="match status" value="1"/>
</dbReference>
<dbReference type="PANTHER" id="PTHR33280">
    <property type="entry name" value="50S RIBOSOMAL PROTEIN L31, CHLOROPLASTIC"/>
    <property type="match status" value="1"/>
</dbReference>
<dbReference type="PANTHER" id="PTHR33280:SF1">
    <property type="entry name" value="LARGE RIBOSOMAL SUBUNIT PROTEIN BL31C"/>
    <property type="match status" value="1"/>
</dbReference>
<dbReference type="Pfam" id="PF01197">
    <property type="entry name" value="Ribosomal_L31"/>
    <property type="match status" value="1"/>
</dbReference>
<dbReference type="PRINTS" id="PR01249">
    <property type="entry name" value="RIBOSOMALL31"/>
</dbReference>
<dbReference type="SUPFAM" id="SSF143800">
    <property type="entry name" value="L28p-like"/>
    <property type="match status" value="1"/>
</dbReference>
<dbReference type="PROSITE" id="PS01143">
    <property type="entry name" value="RIBOSOMAL_L31"/>
    <property type="match status" value="1"/>
</dbReference>
<name>RL31_CAMJJ</name>
<proteinExistence type="inferred from homology"/>
<sequence>MKKEIHPEYVECKVSCACGNTFTTKSNKAELRVDICSNCHPFFTGSEKIVDAAGRVEKFKKKYAMQ</sequence>
<keyword id="KW-0479">Metal-binding</keyword>
<keyword id="KW-0687">Ribonucleoprotein</keyword>
<keyword id="KW-0689">Ribosomal protein</keyword>
<keyword id="KW-0694">RNA-binding</keyword>
<keyword id="KW-0699">rRNA-binding</keyword>
<keyword id="KW-0862">Zinc</keyword>
<reference key="1">
    <citation type="submission" date="2006-12" db="EMBL/GenBank/DDBJ databases">
        <authorList>
            <person name="Fouts D.E."/>
            <person name="Nelson K.E."/>
            <person name="Sebastian Y."/>
        </authorList>
    </citation>
    <scope>NUCLEOTIDE SEQUENCE [LARGE SCALE GENOMIC DNA]</scope>
    <source>
        <strain>81-176</strain>
    </source>
</reference>
<comment type="function">
    <text evidence="1">Binds the 23S rRNA.</text>
</comment>
<comment type="cofactor">
    <cofactor evidence="1">
        <name>Zn(2+)</name>
        <dbReference type="ChEBI" id="CHEBI:29105"/>
    </cofactor>
    <text evidence="1">Binds 1 zinc ion per subunit.</text>
</comment>
<comment type="subunit">
    <text evidence="1">Part of the 50S ribosomal subunit.</text>
</comment>
<comment type="similarity">
    <text evidence="1">Belongs to the bacterial ribosomal protein bL31 family. Type A subfamily.</text>
</comment>
<feature type="chain" id="PRO_1000126583" description="Large ribosomal subunit protein bL31">
    <location>
        <begin position="1"/>
        <end position="66"/>
    </location>
</feature>
<feature type="binding site" evidence="1">
    <location>
        <position position="16"/>
    </location>
    <ligand>
        <name>Zn(2+)</name>
        <dbReference type="ChEBI" id="CHEBI:29105"/>
    </ligand>
</feature>
<feature type="binding site" evidence="1">
    <location>
        <position position="18"/>
    </location>
    <ligand>
        <name>Zn(2+)</name>
        <dbReference type="ChEBI" id="CHEBI:29105"/>
    </ligand>
</feature>
<feature type="binding site" evidence="1">
    <location>
        <position position="36"/>
    </location>
    <ligand>
        <name>Zn(2+)</name>
        <dbReference type="ChEBI" id="CHEBI:29105"/>
    </ligand>
</feature>
<feature type="binding site" evidence="1">
    <location>
        <position position="39"/>
    </location>
    <ligand>
        <name>Zn(2+)</name>
        <dbReference type="ChEBI" id="CHEBI:29105"/>
    </ligand>
</feature>
<gene>
    <name evidence="1" type="primary">rpmE</name>
    <name type="ordered locus">CJJ81176_0191</name>
</gene>
<accession>A1VXN9</accession>
<protein>
    <recommendedName>
        <fullName evidence="1">Large ribosomal subunit protein bL31</fullName>
    </recommendedName>
    <alternativeName>
        <fullName evidence="2">50S ribosomal protein L31</fullName>
    </alternativeName>
</protein>
<organism>
    <name type="scientific">Campylobacter jejuni subsp. jejuni serotype O:23/36 (strain 81-176)</name>
    <dbReference type="NCBI Taxonomy" id="354242"/>
    <lineage>
        <taxon>Bacteria</taxon>
        <taxon>Pseudomonadati</taxon>
        <taxon>Campylobacterota</taxon>
        <taxon>Epsilonproteobacteria</taxon>
        <taxon>Campylobacterales</taxon>
        <taxon>Campylobacteraceae</taxon>
        <taxon>Campylobacter</taxon>
    </lineage>
</organism>
<evidence type="ECO:0000255" key="1">
    <source>
        <dbReference type="HAMAP-Rule" id="MF_00501"/>
    </source>
</evidence>
<evidence type="ECO:0000305" key="2"/>